<evidence type="ECO:0000255" key="1">
    <source>
        <dbReference type="HAMAP-Rule" id="MF_00394"/>
    </source>
</evidence>
<evidence type="ECO:0000305" key="2"/>
<name>GPDA_PAULE</name>
<organism>
    <name type="scientific">Paucimonas lemoignei</name>
    <name type="common">Pseudomonas lemoignei</name>
    <dbReference type="NCBI Taxonomy" id="29443"/>
    <lineage>
        <taxon>Bacteria</taxon>
        <taxon>Pseudomonadati</taxon>
        <taxon>Pseudomonadota</taxon>
        <taxon>Betaproteobacteria</taxon>
        <taxon>Burkholderiales</taxon>
        <taxon>Burkholderiaceae</taxon>
        <taxon>Paucimonas</taxon>
    </lineage>
</organism>
<protein>
    <recommendedName>
        <fullName evidence="1">Glycerol-3-phosphate dehydrogenase [NAD(P)+]</fullName>
        <ecNumber evidence="1">1.1.1.94</ecNumber>
    </recommendedName>
    <alternativeName>
        <fullName evidence="1">NAD(P)(+)-dependent glycerol-3-phosphate dehydrogenase</fullName>
    </alternativeName>
    <alternativeName>
        <fullName evidence="1">NAD(P)H-dependent dihydroxyacetone-phosphate reductase</fullName>
    </alternativeName>
</protein>
<accession>Q59680</accession>
<feature type="chain" id="PRO_0000138010" description="Glycerol-3-phosphate dehydrogenase [NAD(P)+]">
    <location>
        <begin position="1"/>
        <end position="335"/>
    </location>
</feature>
<feature type="active site" description="Proton acceptor" evidence="1">
    <location>
        <position position="190"/>
    </location>
</feature>
<feature type="binding site" evidence="1">
    <location>
        <position position="11"/>
    </location>
    <ligand>
        <name>NADPH</name>
        <dbReference type="ChEBI" id="CHEBI:57783"/>
    </ligand>
</feature>
<feature type="binding site" evidence="1">
    <location>
        <position position="30"/>
    </location>
    <ligand>
        <name>NADPH</name>
        <dbReference type="ChEBI" id="CHEBI:57783"/>
    </ligand>
</feature>
<feature type="binding site" evidence="1">
    <location>
        <position position="106"/>
    </location>
    <ligand>
        <name>NADPH</name>
        <dbReference type="ChEBI" id="CHEBI:57783"/>
    </ligand>
</feature>
<feature type="binding site" evidence="1">
    <location>
        <position position="106"/>
    </location>
    <ligand>
        <name>sn-glycerol 3-phosphate</name>
        <dbReference type="ChEBI" id="CHEBI:57597"/>
    </ligand>
</feature>
<feature type="binding site" evidence="1">
    <location>
        <position position="135"/>
    </location>
    <ligand>
        <name>sn-glycerol 3-phosphate</name>
        <dbReference type="ChEBI" id="CHEBI:57597"/>
    </ligand>
</feature>
<feature type="binding site" evidence="1">
    <location>
        <position position="137"/>
    </location>
    <ligand>
        <name>sn-glycerol 3-phosphate</name>
        <dbReference type="ChEBI" id="CHEBI:57597"/>
    </ligand>
</feature>
<feature type="binding site" evidence="1">
    <location>
        <position position="139"/>
    </location>
    <ligand>
        <name>NADPH</name>
        <dbReference type="ChEBI" id="CHEBI:57783"/>
    </ligand>
</feature>
<feature type="binding site" evidence="1">
    <location>
        <position position="190"/>
    </location>
    <ligand>
        <name>sn-glycerol 3-phosphate</name>
        <dbReference type="ChEBI" id="CHEBI:57597"/>
    </ligand>
</feature>
<feature type="binding site" evidence="1">
    <location>
        <position position="243"/>
    </location>
    <ligand>
        <name>sn-glycerol 3-phosphate</name>
        <dbReference type="ChEBI" id="CHEBI:57597"/>
    </ligand>
</feature>
<feature type="binding site" evidence="1">
    <location>
        <position position="253"/>
    </location>
    <ligand>
        <name>sn-glycerol 3-phosphate</name>
        <dbReference type="ChEBI" id="CHEBI:57597"/>
    </ligand>
</feature>
<feature type="binding site" evidence="1">
    <location>
        <position position="254"/>
    </location>
    <ligand>
        <name>NADPH</name>
        <dbReference type="ChEBI" id="CHEBI:57783"/>
    </ligand>
</feature>
<feature type="binding site" evidence="1">
    <location>
        <position position="254"/>
    </location>
    <ligand>
        <name>sn-glycerol 3-phosphate</name>
        <dbReference type="ChEBI" id="CHEBI:57597"/>
    </ligand>
</feature>
<feature type="binding site" evidence="1">
    <location>
        <position position="255"/>
    </location>
    <ligand>
        <name>sn-glycerol 3-phosphate</name>
        <dbReference type="ChEBI" id="CHEBI:57597"/>
    </ligand>
</feature>
<feature type="binding site" evidence="1">
    <location>
        <position position="278"/>
    </location>
    <ligand>
        <name>NADPH</name>
        <dbReference type="ChEBI" id="CHEBI:57783"/>
    </ligand>
</feature>
<feature type="binding site" evidence="1">
    <location>
        <position position="280"/>
    </location>
    <ligand>
        <name>NADPH</name>
        <dbReference type="ChEBI" id="CHEBI:57783"/>
    </ligand>
</feature>
<sequence length="335" mass="34537">MRISILGAGAWGTALAIALAERHDVVLWGRSEDAMAQRARSXENTAYLPGHPLPAALKATADFSLALDHVAQGDGLLIAATSVAGLRPLAQQLQGKAIPNLVWLCKGLEEGSGLLPHQVVREVLGTQLPAGVLSGPSFAQEVAQGLPCALVIAAEDAALRELVVAAVHGPAIRVYSSDDVVGVEVGGAVKNILAIATGILDGMSLGLNARAALITRGLAEITRLGIALGARAETFMGLAGVGDLILTCTGDLSRNRKVGLGLAQGKPLETIVTELGHVAEGVRCAAAVRNLAQQLQIEMPITNAVAGILFDGHSPRATVEQLLARHPRDESISAS</sequence>
<comment type="function">
    <text evidence="1">Catalyzes the reduction of the glycolytic intermediate dihydroxyacetone phosphate (DHAP) to sn-glycerol 3-phosphate (G3P), the key precursor for phospholipid synthesis.</text>
</comment>
<comment type="catalytic activity">
    <reaction evidence="1">
        <text>sn-glycerol 3-phosphate + NAD(+) = dihydroxyacetone phosphate + NADH + H(+)</text>
        <dbReference type="Rhea" id="RHEA:11092"/>
        <dbReference type="ChEBI" id="CHEBI:15378"/>
        <dbReference type="ChEBI" id="CHEBI:57540"/>
        <dbReference type="ChEBI" id="CHEBI:57597"/>
        <dbReference type="ChEBI" id="CHEBI:57642"/>
        <dbReference type="ChEBI" id="CHEBI:57945"/>
        <dbReference type="EC" id="1.1.1.94"/>
    </reaction>
    <physiologicalReaction direction="right-to-left" evidence="1">
        <dbReference type="Rhea" id="RHEA:11094"/>
    </physiologicalReaction>
</comment>
<comment type="catalytic activity">
    <reaction evidence="1">
        <text>sn-glycerol 3-phosphate + NADP(+) = dihydroxyacetone phosphate + NADPH + H(+)</text>
        <dbReference type="Rhea" id="RHEA:11096"/>
        <dbReference type="ChEBI" id="CHEBI:15378"/>
        <dbReference type="ChEBI" id="CHEBI:57597"/>
        <dbReference type="ChEBI" id="CHEBI:57642"/>
        <dbReference type="ChEBI" id="CHEBI:57783"/>
        <dbReference type="ChEBI" id="CHEBI:58349"/>
        <dbReference type="EC" id="1.1.1.94"/>
    </reaction>
    <physiologicalReaction direction="right-to-left" evidence="1">
        <dbReference type="Rhea" id="RHEA:11098"/>
    </physiologicalReaction>
</comment>
<comment type="pathway">
    <text evidence="1">Membrane lipid metabolism; glycerophospholipid metabolism.</text>
</comment>
<comment type="subcellular location">
    <subcellularLocation>
        <location evidence="1">Cytoplasm</location>
    </subcellularLocation>
</comment>
<comment type="similarity">
    <text evidence="1">Belongs to the NAD-dependent glycerol-3-phosphate dehydrogenase family.</text>
</comment>
<comment type="sequence caution" evidence="2">
    <conflict type="frameshift">
        <sequence resource="EMBL-CDS" id="AAA65704"/>
    </conflict>
</comment>
<dbReference type="EC" id="1.1.1.94" evidence="1"/>
<dbReference type="EMBL" id="U12977">
    <property type="protein sequence ID" value="AAA65704.1"/>
    <property type="status" value="ALT_FRAME"/>
    <property type="molecule type" value="Genomic_DNA"/>
</dbReference>
<dbReference type="UniPathway" id="UPA00940"/>
<dbReference type="GO" id="GO:0005829">
    <property type="term" value="C:cytosol"/>
    <property type="evidence" value="ECO:0007669"/>
    <property type="project" value="TreeGrafter"/>
</dbReference>
<dbReference type="GO" id="GO:0047952">
    <property type="term" value="F:glycerol-3-phosphate dehydrogenase [NAD(P)+] activity"/>
    <property type="evidence" value="ECO:0007669"/>
    <property type="project" value="UniProtKB-UniRule"/>
</dbReference>
<dbReference type="GO" id="GO:0051287">
    <property type="term" value="F:NAD binding"/>
    <property type="evidence" value="ECO:0007669"/>
    <property type="project" value="InterPro"/>
</dbReference>
<dbReference type="GO" id="GO:0005975">
    <property type="term" value="P:carbohydrate metabolic process"/>
    <property type="evidence" value="ECO:0007669"/>
    <property type="project" value="InterPro"/>
</dbReference>
<dbReference type="GO" id="GO:0046167">
    <property type="term" value="P:glycerol-3-phosphate biosynthetic process"/>
    <property type="evidence" value="ECO:0007669"/>
    <property type="project" value="UniProtKB-UniRule"/>
</dbReference>
<dbReference type="GO" id="GO:0046168">
    <property type="term" value="P:glycerol-3-phosphate catabolic process"/>
    <property type="evidence" value="ECO:0007669"/>
    <property type="project" value="InterPro"/>
</dbReference>
<dbReference type="GO" id="GO:0006650">
    <property type="term" value="P:glycerophospholipid metabolic process"/>
    <property type="evidence" value="ECO:0007669"/>
    <property type="project" value="UniProtKB-UniRule"/>
</dbReference>
<dbReference type="GO" id="GO:0008654">
    <property type="term" value="P:phospholipid biosynthetic process"/>
    <property type="evidence" value="ECO:0007669"/>
    <property type="project" value="UniProtKB-KW"/>
</dbReference>
<dbReference type="FunFam" id="1.10.1040.10:FF:000001">
    <property type="entry name" value="Glycerol-3-phosphate dehydrogenase [NAD(P)+]"/>
    <property type="match status" value="1"/>
</dbReference>
<dbReference type="FunFam" id="3.40.50.720:FF:000019">
    <property type="entry name" value="Glycerol-3-phosphate dehydrogenase [NAD(P)+]"/>
    <property type="match status" value="1"/>
</dbReference>
<dbReference type="Gene3D" id="1.10.1040.10">
    <property type="entry name" value="N-(1-d-carboxylethyl)-l-norvaline Dehydrogenase, domain 2"/>
    <property type="match status" value="1"/>
</dbReference>
<dbReference type="Gene3D" id="3.40.50.720">
    <property type="entry name" value="NAD(P)-binding Rossmann-like Domain"/>
    <property type="match status" value="1"/>
</dbReference>
<dbReference type="HAMAP" id="MF_00394">
    <property type="entry name" value="NAD_Glyc3P_dehydrog"/>
    <property type="match status" value="1"/>
</dbReference>
<dbReference type="InterPro" id="IPR008927">
    <property type="entry name" value="6-PGluconate_DH-like_C_sf"/>
</dbReference>
<dbReference type="InterPro" id="IPR013328">
    <property type="entry name" value="6PGD_dom2"/>
</dbReference>
<dbReference type="InterPro" id="IPR006168">
    <property type="entry name" value="G3P_DH_NAD-dep"/>
</dbReference>
<dbReference type="InterPro" id="IPR006109">
    <property type="entry name" value="G3P_DH_NAD-dep_C"/>
</dbReference>
<dbReference type="InterPro" id="IPR011128">
    <property type="entry name" value="G3P_DH_NAD-dep_N"/>
</dbReference>
<dbReference type="InterPro" id="IPR036291">
    <property type="entry name" value="NAD(P)-bd_dom_sf"/>
</dbReference>
<dbReference type="NCBIfam" id="NF000940">
    <property type="entry name" value="PRK00094.1-2"/>
    <property type="match status" value="1"/>
</dbReference>
<dbReference type="NCBIfam" id="NF000942">
    <property type="entry name" value="PRK00094.1-4"/>
    <property type="match status" value="1"/>
</dbReference>
<dbReference type="PANTHER" id="PTHR11728">
    <property type="entry name" value="GLYCEROL-3-PHOSPHATE DEHYDROGENASE"/>
    <property type="match status" value="1"/>
</dbReference>
<dbReference type="PANTHER" id="PTHR11728:SF1">
    <property type="entry name" value="GLYCEROL-3-PHOSPHATE DEHYDROGENASE [NAD(+)] 2, CHLOROPLASTIC"/>
    <property type="match status" value="1"/>
</dbReference>
<dbReference type="Pfam" id="PF07479">
    <property type="entry name" value="NAD_Gly3P_dh_C"/>
    <property type="match status" value="1"/>
</dbReference>
<dbReference type="Pfam" id="PF01210">
    <property type="entry name" value="NAD_Gly3P_dh_N"/>
    <property type="match status" value="1"/>
</dbReference>
<dbReference type="PIRSF" id="PIRSF000114">
    <property type="entry name" value="Glycerol-3-P_dh"/>
    <property type="match status" value="1"/>
</dbReference>
<dbReference type="PRINTS" id="PR00077">
    <property type="entry name" value="GPDHDRGNASE"/>
</dbReference>
<dbReference type="SUPFAM" id="SSF48179">
    <property type="entry name" value="6-phosphogluconate dehydrogenase C-terminal domain-like"/>
    <property type="match status" value="1"/>
</dbReference>
<dbReference type="SUPFAM" id="SSF51735">
    <property type="entry name" value="NAD(P)-binding Rossmann-fold domains"/>
    <property type="match status" value="1"/>
</dbReference>
<dbReference type="PROSITE" id="PS00957">
    <property type="entry name" value="NAD_G3PDH"/>
    <property type="match status" value="1"/>
</dbReference>
<keyword id="KW-0963">Cytoplasm</keyword>
<keyword id="KW-0444">Lipid biosynthesis</keyword>
<keyword id="KW-0443">Lipid metabolism</keyword>
<keyword id="KW-0520">NAD</keyword>
<keyword id="KW-0521">NADP</keyword>
<keyword id="KW-0547">Nucleotide-binding</keyword>
<keyword id="KW-0560">Oxidoreductase</keyword>
<keyword id="KW-0594">Phospholipid biosynthesis</keyword>
<keyword id="KW-1208">Phospholipid metabolism</keyword>
<gene>
    <name evidence="1" type="primary">gpsA</name>
</gene>
<proteinExistence type="inferred from homology"/>
<reference key="1">
    <citation type="journal article" date="1995" name="J. Bacteriol.">
        <title>Biochemical and molecular characterization of the Pseudomonas lemoignei polyhydroxyalkanoate depolymerase system.</title>
        <authorList>
            <person name="Jendrossek D."/>
            <person name="Frisse A."/>
            <person name="Behrends A."/>
            <person name="Andermann M."/>
            <person name="Kratzin H.D."/>
            <person name="Stanislawski T."/>
            <person name="Schlegel H.G."/>
        </authorList>
    </citation>
    <scope>NUCLEOTIDE SEQUENCE [GENOMIC DNA]</scope>
</reference>